<comment type="function">
    <text evidence="3">Catalyzes the hydroxylation of L-isoleucine at the C-4' position to form L-4'-hydroxyisoleucine (4'-HIL) (PubMed:23554367). Exhibits low activity with L-valine and L-methionine (PubMed:23554367).</text>
</comment>
<comment type="catalytic activity">
    <reaction evidence="3">
        <text>L-isoleucine + 2-oxoglutarate + O2 = 3(1)-hydroxy-L-isoleucine + succinate + CO2</text>
        <dbReference type="Rhea" id="RHEA:63872"/>
        <dbReference type="ChEBI" id="CHEBI:15379"/>
        <dbReference type="ChEBI" id="CHEBI:16526"/>
        <dbReference type="ChEBI" id="CHEBI:16810"/>
        <dbReference type="ChEBI" id="CHEBI:30031"/>
        <dbReference type="ChEBI" id="CHEBI:58045"/>
        <dbReference type="ChEBI" id="CHEBI:149627"/>
        <dbReference type="EC" id="1.14.11.74"/>
    </reaction>
    <physiologicalReaction direction="left-to-right" evidence="3">
        <dbReference type="Rhea" id="RHEA:63873"/>
    </physiologicalReaction>
</comment>
<comment type="cofactor">
    <cofactor evidence="3">
        <name>L-ascorbate</name>
        <dbReference type="ChEBI" id="CHEBI:38290"/>
    </cofactor>
    <text evidence="1">Binds 1 ascorbate molecule per subunit.</text>
</comment>
<comment type="cofactor">
    <cofactor evidence="3">
        <name>Fe(2+)</name>
        <dbReference type="ChEBI" id="CHEBI:29033"/>
    </cofactor>
    <text evidence="1">Binds 1 Fe(2+) ion per subunit.</text>
</comment>
<comment type="similarity">
    <text evidence="5">Belongs to the iron/ascorbate-dependent oxidoreductase family.</text>
</comment>
<evidence type="ECO:0000250" key="1">
    <source>
        <dbReference type="UniProtKB" id="E2GIN1"/>
    </source>
</evidence>
<evidence type="ECO:0000250" key="2">
    <source>
        <dbReference type="UniProtKB" id="Q96323"/>
    </source>
</evidence>
<evidence type="ECO:0000269" key="3">
    <source>
    </source>
</evidence>
<evidence type="ECO:0000303" key="4">
    <source>
    </source>
</evidence>
<evidence type="ECO:0000305" key="5"/>
<evidence type="ECO:0000312" key="6">
    <source>
        <dbReference type="EMBL" id="BAK13116.1"/>
    </source>
</evidence>
<feature type="chain" id="PRO_0000454109" description="L-isoleucine 3(1)-dioxygenase">
    <location>
        <begin position="1"/>
        <end position="296"/>
    </location>
</feature>
<feature type="binding site" evidence="2">
    <location>
        <position position="176"/>
    </location>
    <ligand>
        <name>Fe cation</name>
        <dbReference type="ChEBI" id="CHEBI:24875"/>
        <note>catalytic</note>
    </ligand>
</feature>
<feature type="binding site" evidence="2">
    <location>
        <position position="178"/>
    </location>
    <ligand>
        <name>Fe cation</name>
        <dbReference type="ChEBI" id="CHEBI:24875"/>
        <note>catalytic</note>
    </ligand>
</feature>
<feature type="binding site" evidence="2">
    <location>
        <position position="267"/>
    </location>
    <ligand>
        <name>Fe cation</name>
        <dbReference type="ChEBI" id="CHEBI:24875"/>
        <note>catalytic</note>
    </ligand>
</feature>
<dbReference type="EC" id="1.14.11.74" evidence="3"/>
<dbReference type="EMBL" id="AP012032">
    <property type="protein sequence ID" value="BAK13116.1"/>
    <property type="molecule type" value="Genomic_DNA"/>
</dbReference>
<dbReference type="RefSeq" id="WP_014594863.1">
    <property type="nucleotide sequence ID" value="NC_017531.2"/>
</dbReference>
<dbReference type="SMR" id="A0A0H3L1B8"/>
<dbReference type="KEGG" id="paj:PAJ_3036"/>
<dbReference type="PATRIC" id="fig|553.3.peg.223"/>
<dbReference type="eggNOG" id="ENOG502Z9CB">
    <property type="taxonomic scope" value="Bacteria"/>
</dbReference>
<dbReference type="HOGENOM" id="CLU_080184_0_0_6"/>
<dbReference type="OrthoDB" id="4009736at2"/>
<dbReference type="BioCyc" id="MetaCyc:MONOMER-21133"/>
<dbReference type="Proteomes" id="UP000006690">
    <property type="component" value="Chromosome"/>
</dbReference>
<dbReference type="GO" id="GO:0051213">
    <property type="term" value="F:dioxygenase activity"/>
    <property type="evidence" value="ECO:0007669"/>
    <property type="project" value="UniProtKB-KW"/>
</dbReference>
<dbReference type="GO" id="GO:0031418">
    <property type="term" value="F:L-ascorbic acid binding"/>
    <property type="evidence" value="ECO:0007669"/>
    <property type="project" value="UniProtKB-KW"/>
</dbReference>
<dbReference type="GO" id="GO:0046872">
    <property type="term" value="F:metal ion binding"/>
    <property type="evidence" value="ECO:0007669"/>
    <property type="project" value="UniProtKB-KW"/>
</dbReference>
<dbReference type="Gene3D" id="2.60.120.620">
    <property type="entry name" value="q2cbj1_9rhob like domain"/>
    <property type="match status" value="1"/>
</dbReference>
<dbReference type="InterPro" id="IPR053685">
    <property type="entry name" value="Ile_3(1)-dioxygenase-like"/>
</dbReference>
<dbReference type="InterPro" id="IPR055091">
    <property type="entry name" value="WelO5-like"/>
</dbReference>
<dbReference type="NCBIfam" id="NF041274">
    <property type="entry name" value="isoleu_diox_hilA"/>
    <property type="match status" value="1"/>
</dbReference>
<dbReference type="Pfam" id="PF22814">
    <property type="entry name" value="WelO5"/>
    <property type="match status" value="1"/>
</dbReference>
<accession>A0A0H3L1B8</accession>
<gene>
    <name evidence="4" type="primary">hilA</name>
    <name evidence="6" type="ordered locus">PAJ_3036</name>
</gene>
<proteinExistence type="evidence at protein level"/>
<reference key="1">
    <citation type="journal article" date="2012" name="Appl. Microbiol. Biotechnol.">
        <title>The complete genome sequence of Pantoea ananatis AJ13355, an organism with great biotechnological potential.</title>
        <authorList>
            <person name="Hara Y."/>
            <person name="Kadotani N."/>
            <person name="Izui H."/>
            <person name="Katashkina J.I."/>
            <person name="Kuvaeva T.M."/>
            <person name="Andreeva I.G."/>
            <person name="Golubeva L.I."/>
            <person name="Malko D.B."/>
            <person name="Makeev V.J."/>
            <person name="Mashko S.V."/>
            <person name="Kozlov Y.I."/>
        </authorList>
    </citation>
    <scope>NUCLEOTIDE SEQUENCE [LARGE SCALE GENOMIC DNA]</scope>
    <source>
        <strain>AJ13355</strain>
    </source>
</reference>
<reference key="2">
    <citation type="journal article" date="2013" name="MicrobiologyOpen">
        <title>A novel L-isoleucine-4'-dioxygenase and L-isoleucine dihydroxylation cascade in Pantoea ananatis.</title>
        <authorList>
            <person name="Smirnov S.V."/>
            <person name="Sokolov P.M."/>
            <person name="Kotlyarova V.A."/>
            <person name="Samsonova N.N."/>
            <person name="Kodera T."/>
            <person name="Sugiyama M."/>
            <person name="Torii T."/>
            <person name="Hibi M."/>
            <person name="Shimizu S."/>
            <person name="Yokozeki K."/>
            <person name="Ogawa J."/>
        </authorList>
    </citation>
    <scope>FUNCTION</scope>
    <scope>CATALYTIC ACTIVITY</scope>
    <scope>COFACTOR</scope>
    <source>
        <strain>AJ13355</strain>
    </source>
</reference>
<name>HILA_PANAA</name>
<keyword id="KW-0223">Dioxygenase</keyword>
<keyword id="KW-0408">Iron</keyword>
<keyword id="KW-0479">Metal-binding</keyword>
<keyword id="KW-0560">Oxidoreductase</keyword>
<keyword id="KW-0847">Vitamin C</keyword>
<sequence>MTDLLTLEPTQTILTGSKKTNFGYLESTDGVINFSIVKNIILNGHHHGNVLYVIRNYASKAVCEKLAKNFDYRVTQSGGNRADDGFVLTNQIGATQFSRNGEQYIHEVNRVNQSVADLMKATSAEDSESLFLNLTLEKEFLERGIHFGPARFKNGYACFATFRRWLDNGVMSLMPHEDMAQVDFAKEDGFEIANTQTVTAYNVCLEAAQGGGQLKIWNLIPDQVCRETLGVTRTGYPYPPHLLNETESLSVQLNAGDLYFMNACHLHGVSSVSEGSRLTAGRFIGKLNDRKVVYWT</sequence>
<organism>
    <name type="scientific">Pantoea ananatis (strain AJ13355)</name>
    <dbReference type="NCBI Taxonomy" id="932677"/>
    <lineage>
        <taxon>Bacteria</taxon>
        <taxon>Pseudomonadati</taxon>
        <taxon>Pseudomonadota</taxon>
        <taxon>Gammaproteobacteria</taxon>
        <taxon>Enterobacterales</taxon>
        <taxon>Erwiniaceae</taxon>
        <taxon>Pantoea</taxon>
    </lineage>
</organism>
<protein>
    <recommendedName>
        <fullName evidence="5">L-isoleucine 3(1)-dioxygenase</fullName>
        <ecNumber evidence="3">1.14.11.74</ecNumber>
    </recommendedName>
    <alternativeName>
        <fullName evidence="5">L-isoleucine 4'-dioxygenase</fullName>
    </alternativeName>
</protein>